<organism>
    <name type="scientific">Mycolicibacterium smegmatis (strain ATCC 700084 / mc(2)155)</name>
    <name type="common">Mycobacterium smegmatis</name>
    <dbReference type="NCBI Taxonomy" id="246196"/>
    <lineage>
        <taxon>Bacteria</taxon>
        <taxon>Bacillati</taxon>
        <taxon>Actinomycetota</taxon>
        <taxon>Actinomycetes</taxon>
        <taxon>Mycobacteriales</taxon>
        <taxon>Mycobacteriaceae</taxon>
        <taxon>Mycolicibacterium</taxon>
    </lineage>
</organism>
<reference key="1">
    <citation type="submission" date="2006-10" db="EMBL/GenBank/DDBJ databases">
        <authorList>
            <person name="Fleischmann R.D."/>
            <person name="Dodson R.J."/>
            <person name="Haft D.H."/>
            <person name="Merkel J.S."/>
            <person name="Nelson W.C."/>
            <person name="Fraser C.M."/>
        </authorList>
    </citation>
    <scope>NUCLEOTIDE SEQUENCE [LARGE SCALE GENOMIC DNA]</scope>
    <source>
        <strain>ATCC 700084 / mc(2)155</strain>
    </source>
</reference>
<reference key="2">
    <citation type="journal article" date="2007" name="Genome Biol.">
        <title>Interrupted coding sequences in Mycobacterium smegmatis: authentic mutations or sequencing errors?</title>
        <authorList>
            <person name="Deshayes C."/>
            <person name="Perrodou E."/>
            <person name="Gallien S."/>
            <person name="Euphrasie D."/>
            <person name="Schaeffer C."/>
            <person name="Van-Dorsselaer A."/>
            <person name="Poch O."/>
            <person name="Lecompte O."/>
            <person name="Reyrat J.-M."/>
        </authorList>
    </citation>
    <scope>NUCLEOTIDE SEQUENCE [LARGE SCALE GENOMIC DNA]</scope>
    <source>
        <strain>ATCC 700084 / mc(2)155</strain>
    </source>
</reference>
<reference key="3">
    <citation type="journal article" date="2009" name="Genome Res.">
        <title>Ortho-proteogenomics: multiple proteomes investigation through orthology and a new MS-based protocol.</title>
        <authorList>
            <person name="Gallien S."/>
            <person name="Perrodou E."/>
            <person name="Carapito C."/>
            <person name="Deshayes C."/>
            <person name="Reyrat J.-M."/>
            <person name="Van Dorsselaer A."/>
            <person name="Poch O."/>
            <person name="Schaeffer C."/>
            <person name="Lecompte O."/>
        </authorList>
    </citation>
    <scope>NUCLEOTIDE SEQUENCE [LARGE SCALE GENOMIC DNA]</scope>
    <source>
        <strain>ATCC 700084 / mc(2)155</strain>
    </source>
</reference>
<reference key="4">
    <citation type="journal article" date="2003" name="J. Bacteriol.">
        <title>The glycosyltransferase gene encoding the enzyme catalyzing the first step of mycothiol biosynthesis (mshA).</title>
        <authorList>
            <person name="Newton G.L."/>
            <person name="Koledin T."/>
            <person name="Gorovitz B."/>
            <person name="Rawat M."/>
            <person name="Fahey R.C."/>
            <person name="Av-Gay Y."/>
        </authorList>
    </citation>
    <scope>FUNCTION</scope>
</reference>
<reference key="5">
    <citation type="journal article" date="2006" name="J. Biol. Chem.">
        <title>Biochemistry of the initial steps of mycothiol biosynthesis.</title>
        <authorList>
            <person name="Newton G.L."/>
            <person name="Ta P."/>
            <person name="Bzymek K.P."/>
            <person name="Fahey R.C."/>
        </authorList>
    </citation>
    <scope>CATALYTIC ACTIVITY</scope>
    <scope>SUBSTRATE SPECIFICITY</scope>
    <scope>BIOPHYSICOCHEMICAL PROPERTIES</scope>
</reference>
<keyword id="KW-0328">Glycosyltransferase</keyword>
<keyword id="KW-0460">Magnesium</keyword>
<keyword id="KW-0479">Metal-binding</keyword>
<keyword id="KW-1185">Reference proteome</keyword>
<keyword id="KW-0808">Transferase</keyword>
<evidence type="ECO:0000250" key="1"/>
<evidence type="ECO:0000256" key="2">
    <source>
        <dbReference type="SAM" id="MobiDB-lite"/>
    </source>
</evidence>
<evidence type="ECO:0000269" key="3">
    <source>
    </source>
</evidence>
<evidence type="ECO:0000269" key="4">
    <source>
    </source>
</evidence>
<evidence type="ECO:0000305" key="5"/>
<dbReference type="EC" id="2.4.1.250"/>
<dbReference type="EMBL" id="CP000480">
    <property type="protein sequence ID" value="ABK76112.1"/>
    <property type="molecule type" value="Genomic_DNA"/>
</dbReference>
<dbReference type="EMBL" id="CP001663">
    <property type="protein sequence ID" value="AFP37390.1"/>
    <property type="molecule type" value="Genomic_DNA"/>
</dbReference>
<dbReference type="RefSeq" id="WP_011727296.1">
    <property type="nucleotide sequence ID" value="NZ_SIJM01000010.1"/>
</dbReference>
<dbReference type="RefSeq" id="YP_885336.1">
    <property type="nucleotide sequence ID" value="NC_008596.1"/>
</dbReference>
<dbReference type="SMR" id="A0QQZ8"/>
<dbReference type="STRING" id="246196.MSMEG_0933"/>
<dbReference type="CAZy" id="GT4">
    <property type="family name" value="Glycosyltransferase Family 4"/>
</dbReference>
<dbReference type="PaxDb" id="246196-MSMEI_0910"/>
<dbReference type="GeneID" id="93455837"/>
<dbReference type="KEGG" id="msb:LJ00_04630"/>
<dbReference type="KEGG" id="msg:MSMEI_0910"/>
<dbReference type="KEGG" id="msm:MSMEG_0933"/>
<dbReference type="PATRIC" id="fig|246196.19.peg.923"/>
<dbReference type="eggNOG" id="COG0438">
    <property type="taxonomic scope" value="Bacteria"/>
</dbReference>
<dbReference type="OrthoDB" id="9810929at2"/>
<dbReference type="SABIO-RK" id="A0QQZ8"/>
<dbReference type="Proteomes" id="UP000000757">
    <property type="component" value="Chromosome"/>
</dbReference>
<dbReference type="Proteomes" id="UP000006158">
    <property type="component" value="Chromosome"/>
</dbReference>
<dbReference type="GO" id="GO:0008375">
    <property type="term" value="F:acetylglucosaminyltransferase activity"/>
    <property type="evidence" value="ECO:0007669"/>
    <property type="project" value="UniProtKB-UniRule"/>
</dbReference>
<dbReference type="GO" id="GO:0102710">
    <property type="term" value="F:D-inositol-3-phosphate glycosyltransferase activity"/>
    <property type="evidence" value="ECO:0007669"/>
    <property type="project" value="UniProtKB-EC"/>
</dbReference>
<dbReference type="GO" id="GO:0000287">
    <property type="term" value="F:magnesium ion binding"/>
    <property type="evidence" value="ECO:0007669"/>
    <property type="project" value="UniProtKB-UniRule"/>
</dbReference>
<dbReference type="GO" id="GO:0010125">
    <property type="term" value="P:mycothiol biosynthetic process"/>
    <property type="evidence" value="ECO:0007669"/>
    <property type="project" value="UniProtKB-UniRule"/>
</dbReference>
<dbReference type="CDD" id="cd03800">
    <property type="entry name" value="GT4_sucrose_synthase"/>
    <property type="match status" value="1"/>
</dbReference>
<dbReference type="Gene3D" id="3.40.50.2000">
    <property type="entry name" value="Glycogen Phosphorylase B"/>
    <property type="match status" value="2"/>
</dbReference>
<dbReference type="HAMAP" id="MF_01695">
    <property type="entry name" value="MshA"/>
    <property type="match status" value="1"/>
</dbReference>
<dbReference type="InterPro" id="IPR001296">
    <property type="entry name" value="Glyco_trans_1"/>
</dbReference>
<dbReference type="InterPro" id="IPR028098">
    <property type="entry name" value="Glyco_trans_4-like_N"/>
</dbReference>
<dbReference type="InterPro" id="IPR017814">
    <property type="entry name" value="Mycothiol_biosynthesis_MshA"/>
</dbReference>
<dbReference type="NCBIfam" id="TIGR03449">
    <property type="entry name" value="mycothiol_MshA"/>
    <property type="match status" value="1"/>
</dbReference>
<dbReference type="PANTHER" id="PTHR12526:SF510">
    <property type="entry name" value="D-INOSITOL 3-PHOSPHATE GLYCOSYLTRANSFERASE"/>
    <property type="match status" value="1"/>
</dbReference>
<dbReference type="PANTHER" id="PTHR12526">
    <property type="entry name" value="GLYCOSYLTRANSFERASE"/>
    <property type="match status" value="1"/>
</dbReference>
<dbReference type="Pfam" id="PF13579">
    <property type="entry name" value="Glyco_trans_4_4"/>
    <property type="match status" value="1"/>
</dbReference>
<dbReference type="Pfam" id="PF00534">
    <property type="entry name" value="Glycos_transf_1"/>
    <property type="match status" value="1"/>
</dbReference>
<dbReference type="SUPFAM" id="SSF53756">
    <property type="entry name" value="UDP-Glycosyltransferase/glycogen phosphorylase"/>
    <property type="match status" value="1"/>
</dbReference>
<protein>
    <recommendedName>
        <fullName>D-inositol 3-phosphate glycosyltransferase</fullName>
        <ecNumber>2.4.1.250</ecNumber>
    </recommendedName>
    <alternativeName>
        <fullName>N-acetylglucosamine-inositol-phosphate N-acetylglucosaminyltransferase</fullName>
        <shortName>GlcNAc-Ins-P N-acetylglucosaminyltransferase</shortName>
    </alternativeName>
</protein>
<feature type="chain" id="PRO_0000399824" description="D-inositol 3-phosphate glycosyltransferase">
    <location>
        <begin position="1"/>
        <end position="434"/>
    </location>
</feature>
<feature type="region of interest" description="Disordered" evidence="2">
    <location>
        <begin position="414"/>
        <end position="434"/>
    </location>
</feature>
<feature type="binding site" evidence="1">
    <location>
        <position position="19"/>
    </location>
    <ligand>
        <name>1D-myo-inositol 3-phosphate</name>
        <dbReference type="ChEBI" id="CHEBI:58401"/>
    </ligand>
</feature>
<feature type="binding site" evidence="1">
    <location>
        <begin position="25"/>
        <end position="26"/>
    </location>
    <ligand>
        <name>UDP-N-acetyl-alpha-D-glucosamine</name>
        <dbReference type="ChEBI" id="CHEBI:57705"/>
    </ligand>
</feature>
<feature type="binding site" evidence="1">
    <location>
        <begin position="30"/>
        <end position="35"/>
    </location>
    <ligand>
        <name>1D-myo-inositol 3-phosphate</name>
        <dbReference type="ChEBI" id="CHEBI:58401"/>
    </ligand>
</feature>
<feature type="binding site" evidence="1">
    <location>
        <position position="33"/>
    </location>
    <ligand>
        <name>UDP-N-acetyl-alpha-D-glucosamine</name>
        <dbReference type="ChEBI" id="CHEBI:57705"/>
    </ligand>
</feature>
<feature type="binding site" evidence="1">
    <location>
        <position position="88"/>
    </location>
    <ligand>
        <name>1D-myo-inositol 3-phosphate</name>
        <dbReference type="ChEBI" id="CHEBI:58401"/>
    </ligand>
</feature>
<feature type="binding site" evidence="1">
    <location>
        <position position="121"/>
    </location>
    <ligand>
        <name>1D-myo-inositol 3-phosphate</name>
        <dbReference type="ChEBI" id="CHEBI:58401"/>
    </ligand>
</feature>
<feature type="binding site" evidence="1">
    <location>
        <position position="145"/>
    </location>
    <ligand>
        <name>1D-myo-inositol 3-phosphate</name>
        <dbReference type="ChEBI" id="CHEBI:58401"/>
    </ligand>
</feature>
<feature type="binding site" evidence="1">
    <location>
        <position position="165"/>
    </location>
    <ligand>
        <name>1D-myo-inositol 3-phosphate</name>
        <dbReference type="ChEBI" id="CHEBI:58401"/>
    </ligand>
</feature>
<feature type="binding site" evidence="1">
    <location>
        <position position="239"/>
    </location>
    <ligand>
        <name>UDP-N-acetyl-alpha-D-glucosamine</name>
        <dbReference type="ChEBI" id="CHEBI:57705"/>
    </ligand>
</feature>
<feature type="binding site" evidence="1">
    <location>
        <position position="244"/>
    </location>
    <ligand>
        <name>UDP-N-acetyl-alpha-D-glucosamine</name>
        <dbReference type="ChEBI" id="CHEBI:57705"/>
    </ligand>
</feature>
<feature type="binding site">
    <location>
        <position position="297"/>
    </location>
    <ligand>
        <name>UDP-N-acetyl-alpha-D-glucosamine</name>
        <dbReference type="ChEBI" id="CHEBI:57705"/>
    </ligand>
</feature>
<feature type="binding site" evidence="1">
    <location>
        <position position="306"/>
    </location>
    <ligand>
        <name>Mg(2+)</name>
        <dbReference type="ChEBI" id="CHEBI:18420"/>
    </ligand>
</feature>
<feature type="binding site" evidence="1">
    <location>
        <position position="307"/>
    </location>
    <ligand>
        <name>Mg(2+)</name>
        <dbReference type="ChEBI" id="CHEBI:18420"/>
    </ligand>
</feature>
<feature type="binding site" evidence="1">
    <location>
        <position position="309"/>
    </location>
    <ligand>
        <name>Mg(2+)</name>
        <dbReference type="ChEBI" id="CHEBI:18420"/>
    </ligand>
</feature>
<feature type="binding site" evidence="1">
    <location>
        <position position="319"/>
    </location>
    <ligand>
        <name>UDP-N-acetyl-alpha-D-glucosamine</name>
        <dbReference type="ChEBI" id="CHEBI:57705"/>
    </ligand>
</feature>
<feature type="binding site" evidence="1">
    <location>
        <position position="327"/>
    </location>
    <ligand>
        <name>UDP-N-acetyl-alpha-D-glucosamine</name>
        <dbReference type="ChEBI" id="CHEBI:57705"/>
    </ligand>
</feature>
<feature type="binding site" evidence="1">
    <location>
        <position position="333"/>
    </location>
    <ligand>
        <name>Mg(2+)</name>
        <dbReference type="ChEBI" id="CHEBI:18420"/>
    </ligand>
</feature>
<accession>A0QQZ8</accession>
<accession>I7F752</accession>
<proteinExistence type="evidence at protein level"/>
<sequence length="434" mass="45935">MRLATDLETPRRVAVLSVHTSPLAQPGTGDAGGMNVYVLQTALQLARRGVEVEVFTRATSSADAPVVPVAPGVLVRNVVAGPFEGLDKNDLPTQLCAFTAGVLRAEATHEPGYYDVVHSHYWLSGQVGWLARDRWAVPLVHTAHTLAAVKNAALAAGDAPEPPLRAVGEQQVVDEADRLIVNTEVEAQQLVSLHNADRSRIDVVHPGVDLDVFTPGSRDAARAVFGLPTDQKIVAFVGRIQPLKAPDILLRAAAKLPGVRVLIAGGPSGSGLAQPDTLVRLADELGISDRVTFLPPQSREQLVNVYRAADLVAVPSYSESFGLVAVEAQACGTPVVAAAVGGLPVAVADGVSGALVDGHDIGDWADTISEVLDREPAALSRASAEHAAQFSWAHTVDALLASYSRAMSDYRARHPRPAARRSGRRFSMRRGVRT</sequence>
<name>MSHA_MYCS2</name>
<comment type="function">
    <text evidence="3">Catalyzes the transfer of a N-acetyl-glucosamine moiety to 1D-myo-inositol 3-phosphate to produce 1D-myo-inositol 2-acetamido-2-deoxy-glucopyranoside 3-phosphate in the mycothiol biosynthesis pathway.</text>
</comment>
<comment type="catalytic activity">
    <reaction evidence="4">
        <text>1D-myo-inositol 3-phosphate + UDP-N-acetyl-alpha-D-glucosamine = 1D-myo-inositol 2-acetamido-2-deoxy-alpha-D-glucopyranoside 3-phosphate + UDP + H(+)</text>
        <dbReference type="Rhea" id="RHEA:26188"/>
        <dbReference type="ChEBI" id="CHEBI:15378"/>
        <dbReference type="ChEBI" id="CHEBI:57705"/>
        <dbReference type="ChEBI" id="CHEBI:58223"/>
        <dbReference type="ChEBI" id="CHEBI:58401"/>
        <dbReference type="ChEBI" id="CHEBI:58892"/>
        <dbReference type="EC" id="2.4.1.250"/>
    </reaction>
</comment>
<comment type="biophysicochemical properties">
    <kinetics>
        <KM evidence="4">0.17 mM for UDP-GlcNAc</KM>
        <KM evidence="4">0.15 mM for 1D-inositol 3-phosphate</KM>
        <Vmax evidence="4">0.7 nmol/min/mg enzyme</Vmax>
    </kinetics>
</comment>
<comment type="subunit">
    <text evidence="1">Homodimer.</text>
</comment>
<comment type="similarity">
    <text evidence="5">Belongs to the glycosyltransferase group 1 family. MshA subfamily.</text>
</comment>
<gene>
    <name type="primary">mshA</name>
    <name type="ordered locus">MSMEG_0933</name>
    <name type="ordered locus">MSMEI_0910</name>
</gene>